<evidence type="ECO:0000255" key="1">
    <source>
        <dbReference type="HAMAP-Rule" id="MF_01396"/>
    </source>
</evidence>
<dbReference type="EMBL" id="CP001291">
    <property type="protein sequence ID" value="ACK71037.1"/>
    <property type="molecule type" value="Genomic_DNA"/>
</dbReference>
<dbReference type="RefSeq" id="WP_015954640.1">
    <property type="nucleotide sequence ID" value="NC_011729.1"/>
</dbReference>
<dbReference type="SMR" id="B7KKR8"/>
<dbReference type="STRING" id="65393.PCC7424_2623"/>
<dbReference type="KEGG" id="cyc:PCC7424_2623"/>
<dbReference type="eggNOG" id="COG0636">
    <property type="taxonomic scope" value="Bacteria"/>
</dbReference>
<dbReference type="HOGENOM" id="CLU_148047_2_0_3"/>
<dbReference type="OrthoDB" id="9810379at2"/>
<dbReference type="Proteomes" id="UP000002384">
    <property type="component" value="Chromosome"/>
</dbReference>
<dbReference type="GO" id="GO:0031676">
    <property type="term" value="C:plasma membrane-derived thylakoid membrane"/>
    <property type="evidence" value="ECO:0007669"/>
    <property type="project" value="UniProtKB-SubCell"/>
</dbReference>
<dbReference type="GO" id="GO:0045259">
    <property type="term" value="C:proton-transporting ATP synthase complex"/>
    <property type="evidence" value="ECO:0007669"/>
    <property type="project" value="UniProtKB-KW"/>
</dbReference>
<dbReference type="GO" id="GO:0033177">
    <property type="term" value="C:proton-transporting two-sector ATPase complex, proton-transporting domain"/>
    <property type="evidence" value="ECO:0007669"/>
    <property type="project" value="InterPro"/>
</dbReference>
<dbReference type="GO" id="GO:0008289">
    <property type="term" value="F:lipid binding"/>
    <property type="evidence" value="ECO:0007669"/>
    <property type="project" value="UniProtKB-KW"/>
</dbReference>
<dbReference type="GO" id="GO:0046933">
    <property type="term" value="F:proton-transporting ATP synthase activity, rotational mechanism"/>
    <property type="evidence" value="ECO:0007669"/>
    <property type="project" value="UniProtKB-UniRule"/>
</dbReference>
<dbReference type="CDD" id="cd18183">
    <property type="entry name" value="ATP-synt_Fo_c_ATPH"/>
    <property type="match status" value="1"/>
</dbReference>
<dbReference type="FunFam" id="1.20.20.10:FF:000001">
    <property type="entry name" value="ATP synthase subunit c, chloroplastic"/>
    <property type="match status" value="1"/>
</dbReference>
<dbReference type="Gene3D" id="1.20.20.10">
    <property type="entry name" value="F1F0 ATP synthase subunit C"/>
    <property type="match status" value="1"/>
</dbReference>
<dbReference type="HAMAP" id="MF_01396">
    <property type="entry name" value="ATP_synth_c_bact"/>
    <property type="match status" value="1"/>
</dbReference>
<dbReference type="InterPro" id="IPR005953">
    <property type="entry name" value="ATP_synth_csu_bac/chlpt"/>
</dbReference>
<dbReference type="InterPro" id="IPR000454">
    <property type="entry name" value="ATP_synth_F0_csu"/>
</dbReference>
<dbReference type="InterPro" id="IPR020537">
    <property type="entry name" value="ATP_synth_F0_csu_DDCD_BS"/>
</dbReference>
<dbReference type="InterPro" id="IPR038662">
    <property type="entry name" value="ATP_synth_F0_csu_sf"/>
</dbReference>
<dbReference type="InterPro" id="IPR002379">
    <property type="entry name" value="ATPase_proteolipid_c-like_dom"/>
</dbReference>
<dbReference type="InterPro" id="IPR035921">
    <property type="entry name" value="F/V-ATP_Csub_sf"/>
</dbReference>
<dbReference type="NCBIfam" id="TIGR01260">
    <property type="entry name" value="ATP_synt_c"/>
    <property type="match status" value="1"/>
</dbReference>
<dbReference type="NCBIfam" id="NF005608">
    <property type="entry name" value="PRK07354.1"/>
    <property type="match status" value="1"/>
</dbReference>
<dbReference type="PANTHER" id="PTHR10031">
    <property type="entry name" value="ATP SYNTHASE LIPID-BINDING PROTEIN, MITOCHONDRIAL"/>
    <property type="match status" value="1"/>
</dbReference>
<dbReference type="PANTHER" id="PTHR10031:SF0">
    <property type="entry name" value="ATPASE PROTEIN 9"/>
    <property type="match status" value="1"/>
</dbReference>
<dbReference type="Pfam" id="PF00137">
    <property type="entry name" value="ATP-synt_C"/>
    <property type="match status" value="1"/>
</dbReference>
<dbReference type="PRINTS" id="PR00124">
    <property type="entry name" value="ATPASEC"/>
</dbReference>
<dbReference type="SUPFAM" id="SSF81333">
    <property type="entry name" value="F1F0 ATP synthase subunit C"/>
    <property type="match status" value="1"/>
</dbReference>
<dbReference type="PROSITE" id="PS00605">
    <property type="entry name" value="ATPASE_C"/>
    <property type="match status" value="1"/>
</dbReference>
<gene>
    <name evidence="1" type="primary">atpE</name>
    <name evidence="1" type="synonym">atpH</name>
    <name type="ordered locus">PCC7424_2623</name>
</gene>
<protein>
    <recommendedName>
        <fullName evidence="1">ATP synthase subunit c</fullName>
    </recommendedName>
    <alternativeName>
        <fullName evidence="1">ATP synthase F(0) sector subunit c</fullName>
    </alternativeName>
    <alternativeName>
        <fullName evidence="1">F-type ATPase subunit c</fullName>
        <shortName evidence="1">F-ATPase subunit c</shortName>
    </alternativeName>
    <alternativeName>
        <fullName evidence="1">Lipid-binding protein</fullName>
    </alternativeName>
</protein>
<name>ATPL_GLOC7</name>
<reference key="1">
    <citation type="journal article" date="2011" name="MBio">
        <title>Novel metabolic attributes of the genus Cyanothece, comprising a group of unicellular nitrogen-fixing Cyanobacteria.</title>
        <authorList>
            <person name="Bandyopadhyay A."/>
            <person name="Elvitigala T."/>
            <person name="Welsh E."/>
            <person name="Stockel J."/>
            <person name="Liberton M."/>
            <person name="Min H."/>
            <person name="Sherman L.A."/>
            <person name="Pakrasi H.B."/>
        </authorList>
    </citation>
    <scope>NUCLEOTIDE SEQUENCE [LARGE SCALE GENOMIC DNA]</scope>
    <source>
        <strain>PCC 7424</strain>
    </source>
</reference>
<comment type="function">
    <text evidence="1">F(1)F(0) ATP synthase produces ATP from ADP in the presence of a proton or sodium gradient. F-type ATPases consist of two structural domains, F(1) containing the extramembraneous catalytic core and F(0) containing the membrane proton channel, linked together by a central stalk and a peripheral stalk. During catalysis, ATP synthesis in the catalytic domain of F(1) is coupled via a rotary mechanism of the central stalk subunits to proton translocation.</text>
</comment>
<comment type="function">
    <text evidence="1">Key component of the F(0) channel; it plays a direct role in translocation across the membrane. A homomeric c-ring of between 10-14 subunits forms the central stalk rotor element with the F(1) delta and epsilon subunits.</text>
</comment>
<comment type="subunit">
    <text evidence="1">F-type ATPases have 2 components, F(1) - the catalytic core - and F(0) - the membrane proton channel. F(1) has five subunits: alpha(3), beta(3), gamma(1), delta(1), epsilon(1). F(0) has four main subunits: a(1), b(1), b'(1) and c(10-14). The alpha and beta chains form an alternating ring which encloses part of the gamma chain. F(1) is attached to F(0) by a central stalk formed by the gamma and epsilon chains, while a peripheral stalk is formed by the delta, b and b' chains.</text>
</comment>
<comment type="subcellular location">
    <subcellularLocation>
        <location evidence="1">Cellular thylakoid membrane</location>
        <topology evidence="1">Multi-pass membrane protein</topology>
    </subcellularLocation>
</comment>
<comment type="similarity">
    <text evidence="1">Belongs to the ATPase C chain family.</text>
</comment>
<sequence length="81" mass="8069">MDPMLASASVIAAALAVGLAAIGPGIGQGNASGQAVSGIARQPEAEGKIRGTLLLTLAFMESLTIYGLVISLVLLFANPFA</sequence>
<proteinExistence type="inferred from homology"/>
<feature type="chain" id="PRO_1000184354" description="ATP synthase subunit c">
    <location>
        <begin position="1"/>
        <end position="81"/>
    </location>
</feature>
<feature type="transmembrane region" description="Helical" evidence="1">
    <location>
        <begin position="6"/>
        <end position="26"/>
    </location>
</feature>
<feature type="transmembrane region" description="Helical" evidence="1">
    <location>
        <begin position="57"/>
        <end position="77"/>
    </location>
</feature>
<feature type="site" description="Reversibly protonated during proton transport" evidence="1">
    <location>
        <position position="61"/>
    </location>
</feature>
<keyword id="KW-0066">ATP synthesis</keyword>
<keyword id="KW-0138">CF(0)</keyword>
<keyword id="KW-0375">Hydrogen ion transport</keyword>
<keyword id="KW-0406">Ion transport</keyword>
<keyword id="KW-0446">Lipid-binding</keyword>
<keyword id="KW-0472">Membrane</keyword>
<keyword id="KW-1185">Reference proteome</keyword>
<keyword id="KW-0793">Thylakoid</keyword>
<keyword id="KW-0812">Transmembrane</keyword>
<keyword id="KW-1133">Transmembrane helix</keyword>
<keyword id="KW-0813">Transport</keyword>
<accession>B7KKR8</accession>
<organism>
    <name type="scientific">Gloeothece citriformis (strain PCC 7424)</name>
    <name type="common">Cyanothece sp. (strain PCC 7424)</name>
    <dbReference type="NCBI Taxonomy" id="65393"/>
    <lineage>
        <taxon>Bacteria</taxon>
        <taxon>Bacillati</taxon>
        <taxon>Cyanobacteriota</taxon>
        <taxon>Cyanophyceae</taxon>
        <taxon>Oscillatoriophycideae</taxon>
        <taxon>Chroococcales</taxon>
        <taxon>Aphanothecaceae</taxon>
        <taxon>Gloeothece</taxon>
        <taxon>Gloeothece citriformis</taxon>
    </lineage>
</organism>